<reference key="1">
    <citation type="journal article" date="1999" name="J. Plant Res.">
        <title>Molecular systematics of Trilliaceae I. Phylogenetic analyses of Trillium using matK gene sequences.</title>
        <authorList>
            <person name="Kazempour Osaloo S."/>
            <person name="Utech F.H."/>
            <person name="Ohara M."/>
            <person name="Kawano S."/>
        </authorList>
    </citation>
    <scope>NUCLEOTIDE SEQUENCE [GENOMIC DNA]</scope>
    <source>
        <tissue>Leaf</tissue>
    </source>
</reference>
<keyword id="KW-0150">Chloroplast</keyword>
<keyword id="KW-0507">mRNA processing</keyword>
<keyword id="KW-0934">Plastid</keyword>
<keyword id="KW-0694">RNA-binding</keyword>
<keyword id="KW-0819">tRNA processing</keyword>
<proteinExistence type="inferred from homology"/>
<feature type="chain" id="PRO_0000143766" description="Maturase K">
    <location>
        <begin position="1"/>
        <end position="515"/>
    </location>
</feature>
<evidence type="ECO:0000255" key="1">
    <source>
        <dbReference type="HAMAP-Rule" id="MF_01390"/>
    </source>
</evidence>
<name>MATK_TRILU</name>
<organism>
    <name type="scientific">Trillium luteum</name>
    <name type="common">Yellow wakerobin</name>
    <name type="synonym">Trillium sessile var. luteum</name>
    <dbReference type="NCBI Taxonomy" id="82489"/>
    <lineage>
        <taxon>Eukaryota</taxon>
        <taxon>Viridiplantae</taxon>
        <taxon>Streptophyta</taxon>
        <taxon>Embryophyta</taxon>
        <taxon>Tracheophyta</taxon>
        <taxon>Spermatophyta</taxon>
        <taxon>Magnoliopsida</taxon>
        <taxon>Liliopsida</taxon>
        <taxon>Liliales</taxon>
        <taxon>Melanthiaceae</taxon>
        <taxon>Trillium</taxon>
    </lineage>
</organism>
<comment type="function">
    <text evidence="1">Usually encoded in the trnK tRNA gene intron. Probably assists in splicing its own and other chloroplast group II introns.</text>
</comment>
<comment type="subcellular location">
    <subcellularLocation>
        <location>Plastid</location>
        <location>Chloroplast</location>
    </subcellularLocation>
</comment>
<comment type="similarity">
    <text evidence="1">Belongs to the intron maturase 2 family. MatK subfamily.</text>
</comment>
<dbReference type="EMBL" id="AB017396">
    <property type="protein sequence ID" value="BAA36812.1"/>
    <property type="molecule type" value="Genomic_DNA"/>
</dbReference>
<dbReference type="GO" id="GO:0009507">
    <property type="term" value="C:chloroplast"/>
    <property type="evidence" value="ECO:0007669"/>
    <property type="project" value="UniProtKB-SubCell"/>
</dbReference>
<dbReference type="GO" id="GO:0003723">
    <property type="term" value="F:RNA binding"/>
    <property type="evidence" value="ECO:0007669"/>
    <property type="project" value="UniProtKB-KW"/>
</dbReference>
<dbReference type="GO" id="GO:0006397">
    <property type="term" value="P:mRNA processing"/>
    <property type="evidence" value="ECO:0007669"/>
    <property type="project" value="UniProtKB-KW"/>
</dbReference>
<dbReference type="GO" id="GO:0008380">
    <property type="term" value="P:RNA splicing"/>
    <property type="evidence" value="ECO:0007669"/>
    <property type="project" value="UniProtKB-UniRule"/>
</dbReference>
<dbReference type="GO" id="GO:0008033">
    <property type="term" value="P:tRNA processing"/>
    <property type="evidence" value="ECO:0007669"/>
    <property type="project" value="UniProtKB-KW"/>
</dbReference>
<dbReference type="HAMAP" id="MF_01390">
    <property type="entry name" value="MatK"/>
    <property type="match status" value="1"/>
</dbReference>
<dbReference type="InterPro" id="IPR024937">
    <property type="entry name" value="Domain_X"/>
</dbReference>
<dbReference type="InterPro" id="IPR002866">
    <property type="entry name" value="Maturase_MatK"/>
</dbReference>
<dbReference type="InterPro" id="IPR024942">
    <property type="entry name" value="Maturase_MatK_N"/>
</dbReference>
<dbReference type="PANTHER" id="PTHR34811">
    <property type="entry name" value="MATURASE K"/>
    <property type="match status" value="1"/>
</dbReference>
<dbReference type="PANTHER" id="PTHR34811:SF1">
    <property type="entry name" value="MATURASE K"/>
    <property type="match status" value="1"/>
</dbReference>
<dbReference type="Pfam" id="PF01348">
    <property type="entry name" value="Intron_maturas2"/>
    <property type="match status" value="1"/>
</dbReference>
<dbReference type="Pfam" id="PF01824">
    <property type="entry name" value="MatK_N"/>
    <property type="match status" value="1"/>
</dbReference>
<protein>
    <recommendedName>
        <fullName evidence="1">Maturase K</fullName>
    </recommendedName>
    <alternativeName>
        <fullName evidence="1">Intron maturase</fullName>
    </alternativeName>
</protein>
<accession>Q9XPP0</accession>
<sequence length="515" mass="61075">MEELQGYLEKDGSRQQNFLYPLIFQEYIYTLAHDHGLNSSIFYEPMEIVGLGYDNKSSSVLVKRLITRMYQQNSLIYSMNDFNQNRFVGHNNSFYSNLDSQMVSEGFAVIVEIPFSLRLVPSSEEIPKSQNLRSIHSIFPFLEDKLSHLNYVLDILIPYPIHLEILVQILQCWIQDVPSLHFLRLFLHEFHNWNNLITPTKSISVFSKENKRLFRILYNSYVSEYEFVFVFLRKQSYYLRSTSSRAFLERTHFYVKIEHLIDVCHNHFQKILWFFKDSFMHYVRYKGKAILASRGTYLLIKKWKCYLVNFWQYNFHFWSKPYRIHINPFSNYSFYFLGYISSVLINPSAVKNQMLENFYLVDTLTQNSITIVPVIPLIGSLSKAKFCTILGHPISKPIWAELSDSDIIDRFGRICRNLSHYHSGSSKKQSLYRIKYILRLSCARTLARKHKSTVRNLLQRLGSGLLEEFFTEEEQVISPIFPKTTLFPLHGSHKERIWYLDIIRINDLANYLDWS</sequence>
<geneLocation type="chloroplast"/>
<gene>
    <name evidence="1" type="primary">matK</name>
</gene>